<feature type="chain" id="PRO_1000081152" description="Ion-translocating oxidoreductase complex subunit D">
    <location>
        <begin position="1"/>
        <end position="352"/>
    </location>
</feature>
<feature type="transmembrane region" description="Helical" evidence="1">
    <location>
        <begin position="20"/>
        <end position="40"/>
    </location>
</feature>
<feature type="transmembrane region" description="Helical" evidence="1">
    <location>
        <begin position="42"/>
        <end position="62"/>
    </location>
</feature>
<feature type="transmembrane region" description="Helical" evidence="1">
    <location>
        <begin position="69"/>
        <end position="91"/>
    </location>
</feature>
<feature type="transmembrane region" description="Helical" evidence="1">
    <location>
        <begin position="123"/>
        <end position="143"/>
    </location>
</feature>
<feature type="transmembrane region" description="Helical" evidence="1">
    <location>
        <begin position="215"/>
        <end position="235"/>
    </location>
</feature>
<feature type="transmembrane region" description="Helical" evidence="1">
    <location>
        <begin position="242"/>
        <end position="262"/>
    </location>
</feature>
<feature type="transmembrane region" description="Helical" evidence="1">
    <location>
        <begin position="267"/>
        <end position="287"/>
    </location>
</feature>
<feature type="transmembrane region" description="Helical" evidence="1">
    <location>
        <begin position="301"/>
        <end position="321"/>
    </location>
</feature>
<feature type="transmembrane region" description="Helical" evidence="1">
    <location>
        <begin position="322"/>
        <end position="342"/>
    </location>
</feature>
<feature type="modified residue" description="FMN phosphoryl threonine" evidence="1">
    <location>
        <position position="187"/>
    </location>
</feature>
<reference key="1">
    <citation type="journal article" date="2004" name="Nat. Genet.">
        <title>Comparison of genome degradation in Paratyphi A and Typhi, human-restricted serovars of Salmonella enterica that cause typhoid.</title>
        <authorList>
            <person name="McClelland M."/>
            <person name="Sanderson K.E."/>
            <person name="Clifton S.W."/>
            <person name="Latreille P."/>
            <person name="Porwollik S."/>
            <person name="Sabo A."/>
            <person name="Meyer R."/>
            <person name="Bieri T."/>
            <person name="Ozersky P."/>
            <person name="McLellan M."/>
            <person name="Harkins C.R."/>
            <person name="Wang C."/>
            <person name="Nguyen C."/>
            <person name="Berghoff A."/>
            <person name="Elliott G."/>
            <person name="Kohlberg S."/>
            <person name="Strong C."/>
            <person name="Du F."/>
            <person name="Carter J."/>
            <person name="Kremizki C."/>
            <person name="Layman D."/>
            <person name="Leonard S."/>
            <person name="Sun H."/>
            <person name="Fulton L."/>
            <person name="Nash W."/>
            <person name="Miner T."/>
            <person name="Minx P."/>
            <person name="Delehaunty K."/>
            <person name="Fronick C."/>
            <person name="Magrini V."/>
            <person name="Nhan M."/>
            <person name="Warren W."/>
            <person name="Florea L."/>
            <person name="Spieth J."/>
            <person name="Wilson R.K."/>
        </authorList>
    </citation>
    <scope>NUCLEOTIDE SEQUENCE [LARGE SCALE GENOMIC DNA]</scope>
    <source>
        <strain>ATCC 9150 / SARB42</strain>
    </source>
</reference>
<comment type="function">
    <text evidence="1">Part of a membrane-bound complex that couples electron transfer with translocation of ions across the membrane. Required to maintain the reduced state of SoxR.</text>
</comment>
<comment type="cofactor">
    <cofactor evidence="1">
        <name>FMN</name>
        <dbReference type="ChEBI" id="CHEBI:58210"/>
    </cofactor>
</comment>
<comment type="subunit">
    <text evidence="1">The complex is composed of six subunits: RsxA, RsxB, RsxC, RsxD, RsxE and RsxG.</text>
</comment>
<comment type="subcellular location">
    <subcellularLocation>
        <location evidence="1">Cell inner membrane</location>
        <topology evidence="1">Multi-pass membrane protein</topology>
    </subcellularLocation>
</comment>
<comment type="similarity">
    <text evidence="1">Belongs to the NqrB/RnfD family.</text>
</comment>
<organism>
    <name type="scientific">Salmonella paratyphi A (strain ATCC 9150 / SARB42)</name>
    <dbReference type="NCBI Taxonomy" id="295319"/>
    <lineage>
        <taxon>Bacteria</taxon>
        <taxon>Pseudomonadati</taxon>
        <taxon>Pseudomonadota</taxon>
        <taxon>Gammaproteobacteria</taxon>
        <taxon>Enterobacterales</taxon>
        <taxon>Enterobacteriaceae</taxon>
        <taxon>Salmonella</taxon>
    </lineage>
</organism>
<evidence type="ECO:0000255" key="1">
    <source>
        <dbReference type="HAMAP-Rule" id="MF_00462"/>
    </source>
</evidence>
<sequence>MVFRIASSPYTHNQRQTSRIMLLVLIAALPGIAAQTWFFGWGTLFQIVLAAITALVAEAIVLRLRKQSVASHLQDYSALLTGLLLAVSIPPLAPWWIVVLGTGFAIIIAKQLYGGLGQNPFNPAMIGYVVLLISFPVQMTSWLPPYEIAATTPDILDTLRMIFSGHTASGGDMTLLRTGIDGISQATPLDTFKTSLRAGHSVEQIMQYPIYSGALAGVGWQWVNLAWLVGGVFLLWQKAIRWHIPVSFLLTLALCAALGWLFSPATLASPQLHLLSGATMLGAFFILTDPVTASTTNRGRLIFGALAGVLVWLIRSFGGYPDGVAFAVLLANITVPLIDYYTRPRVYGHRKG</sequence>
<keyword id="KW-0997">Cell inner membrane</keyword>
<keyword id="KW-1003">Cell membrane</keyword>
<keyword id="KW-0249">Electron transport</keyword>
<keyword id="KW-0285">Flavoprotein</keyword>
<keyword id="KW-0288">FMN</keyword>
<keyword id="KW-0472">Membrane</keyword>
<keyword id="KW-0597">Phosphoprotein</keyword>
<keyword id="KW-1278">Translocase</keyword>
<keyword id="KW-0812">Transmembrane</keyword>
<keyword id="KW-1133">Transmembrane helix</keyword>
<keyword id="KW-0813">Transport</keyword>
<gene>
    <name evidence="1" type="primary">rsxD</name>
    <name type="ordered locus">SPA1397</name>
</gene>
<accession>Q5PIC8</accession>
<dbReference type="EC" id="7.-.-.-" evidence="1"/>
<dbReference type="EMBL" id="CP000026">
    <property type="protein sequence ID" value="AAV77338.1"/>
    <property type="molecule type" value="Genomic_DNA"/>
</dbReference>
<dbReference type="RefSeq" id="WP_000231886.1">
    <property type="nucleotide sequence ID" value="NC_006511.1"/>
</dbReference>
<dbReference type="SMR" id="Q5PIC8"/>
<dbReference type="KEGG" id="spt:SPA1397"/>
<dbReference type="HOGENOM" id="CLU_042020_0_0_6"/>
<dbReference type="Proteomes" id="UP000008185">
    <property type="component" value="Chromosome"/>
</dbReference>
<dbReference type="GO" id="GO:0005886">
    <property type="term" value="C:plasma membrane"/>
    <property type="evidence" value="ECO:0007669"/>
    <property type="project" value="UniProtKB-SubCell"/>
</dbReference>
<dbReference type="GO" id="GO:0022900">
    <property type="term" value="P:electron transport chain"/>
    <property type="evidence" value="ECO:0007669"/>
    <property type="project" value="UniProtKB-UniRule"/>
</dbReference>
<dbReference type="GO" id="GO:0055085">
    <property type="term" value="P:transmembrane transport"/>
    <property type="evidence" value="ECO:0007669"/>
    <property type="project" value="InterPro"/>
</dbReference>
<dbReference type="HAMAP" id="MF_00462">
    <property type="entry name" value="RsxD_RnfD"/>
    <property type="match status" value="1"/>
</dbReference>
<dbReference type="InterPro" id="IPR004338">
    <property type="entry name" value="NqrB/RnfD"/>
</dbReference>
<dbReference type="InterPro" id="IPR011303">
    <property type="entry name" value="RnfD_bac"/>
</dbReference>
<dbReference type="NCBIfam" id="NF002011">
    <property type="entry name" value="PRK00816.1"/>
    <property type="match status" value="1"/>
</dbReference>
<dbReference type="NCBIfam" id="TIGR01946">
    <property type="entry name" value="rnfD"/>
    <property type="match status" value="1"/>
</dbReference>
<dbReference type="PANTHER" id="PTHR30578">
    <property type="entry name" value="ELECTRON TRANSPORT COMPLEX PROTEIN RNFD"/>
    <property type="match status" value="1"/>
</dbReference>
<dbReference type="PANTHER" id="PTHR30578:SF0">
    <property type="entry name" value="ION-TRANSLOCATING OXIDOREDUCTASE COMPLEX SUBUNIT D"/>
    <property type="match status" value="1"/>
</dbReference>
<dbReference type="Pfam" id="PF03116">
    <property type="entry name" value="NQR2_RnfD_RnfE"/>
    <property type="match status" value="1"/>
</dbReference>
<name>RSXD_SALPA</name>
<proteinExistence type="inferred from homology"/>
<protein>
    <recommendedName>
        <fullName evidence="1">Ion-translocating oxidoreductase complex subunit D</fullName>
        <ecNumber evidence="1">7.-.-.-</ecNumber>
    </recommendedName>
    <alternativeName>
        <fullName evidence="1">Rsx electron transport complex subunit D</fullName>
    </alternativeName>
</protein>